<name>ADA2A_RAT</name>
<protein>
    <recommendedName>
        <fullName evidence="7">Alpha-2A adrenergic receptor</fullName>
    </recommendedName>
    <alternativeName>
        <fullName>Alpha-2A adrenoreceptor</fullName>
        <shortName>Alpha-2A adrenoceptor</shortName>
        <shortName>Alpha-2AAR</shortName>
    </alternativeName>
    <alternativeName>
        <fullName>Alpha-2D adrenergic receptor</fullName>
    </alternativeName>
    <alternativeName>
        <fullName>CA2-47</fullName>
    </alternativeName>
</protein>
<accession>P22909</accession>
<accession>M0R9R3</accession>
<evidence type="ECO:0000250" key="1"/>
<evidence type="ECO:0000250" key="2">
    <source>
        <dbReference type="UniProtKB" id="Q01338"/>
    </source>
</evidence>
<evidence type="ECO:0000255" key="3"/>
<evidence type="ECO:0000255" key="4">
    <source>
        <dbReference type="PROSITE-ProRule" id="PRU00521"/>
    </source>
</evidence>
<evidence type="ECO:0000256" key="5">
    <source>
        <dbReference type="SAM" id="MobiDB-lite"/>
    </source>
</evidence>
<evidence type="ECO:0000269" key="6">
    <source>
    </source>
</evidence>
<evidence type="ECO:0000305" key="7"/>
<evidence type="ECO:0000312" key="8">
    <source>
        <dbReference type="RGD" id="2056"/>
    </source>
</evidence>
<evidence type="ECO:0007744" key="9">
    <source>
    </source>
</evidence>
<sequence length="465" mass="50630">MFRQEQPLAEGSFAPMGSLQPDAGNSSWNGTEAPGGGTRATPYSLQVTLTLVCLAGLLMLFTVFGNVLVIIAVFTSRALKAPQNLFLVSLASADILVATLVIPFSLANEVMGYWYFGKVWCEIYLALDVLFCTSSIVHLCAISLDRYWSITQAIEYNLKRTPRRIKAIIVTVWVISAVISFPPLISIEKKGAGGGQQPAEPSCKINDQKWYVISSSIGSFFAPCLIMILVYVRIYQIAKRRTRVPPSRRGPDACSAPPGGADRRPNGLGPERGAGTAGAEAEPLPTQLNGAPGEPAPTRPRDGDALDLEESSSSEHAERPQGPGKPERGPRAKGKTKASQVKPGDSLPRRGPGAAGPGASGSGQGEERAGGAKASRWRGRQNREKRFTFVLAVVIGVFVVCWFPFFFTYTLIAVGCPVPYQLFNFFFWFGYCNSSLNPVIYTIFNHDFRRAFKKILCRGDRKRIV</sequence>
<reference key="1">
    <citation type="journal article" date="2004" name="Nature">
        <title>Genome sequence of the Brown Norway rat yields insights into mammalian evolution.</title>
        <authorList>
            <person name="Gibbs R.A."/>
            <person name="Weinstock G.M."/>
            <person name="Metzker M.L."/>
            <person name="Muzny D.M."/>
            <person name="Sodergren E.J."/>
            <person name="Scherer S."/>
            <person name="Scott G."/>
            <person name="Steffen D."/>
            <person name="Worley K.C."/>
            <person name="Burch P.E."/>
            <person name="Okwuonu G."/>
            <person name="Hines S."/>
            <person name="Lewis L."/>
            <person name="Deramo C."/>
            <person name="Delgado O."/>
            <person name="Dugan-Rocha S."/>
            <person name="Miner G."/>
            <person name="Morgan M."/>
            <person name="Hawes A."/>
            <person name="Gill R."/>
            <person name="Holt R.A."/>
            <person name="Adams M.D."/>
            <person name="Amanatides P.G."/>
            <person name="Baden-Tillson H."/>
            <person name="Barnstead M."/>
            <person name="Chin S."/>
            <person name="Evans C.A."/>
            <person name="Ferriera S."/>
            <person name="Fosler C."/>
            <person name="Glodek A."/>
            <person name="Gu Z."/>
            <person name="Jennings D."/>
            <person name="Kraft C.L."/>
            <person name="Nguyen T."/>
            <person name="Pfannkoch C.M."/>
            <person name="Sitter C."/>
            <person name="Sutton G.G."/>
            <person name="Venter J.C."/>
            <person name="Woodage T."/>
            <person name="Smith D."/>
            <person name="Lee H.-M."/>
            <person name="Gustafson E."/>
            <person name="Cahill P."/>
            <person name="Kana A."/>
            <person name="Doucette-Stamm L."/>
            <person name="Weinstock K."/>
            <person name="Fechtel K."/>
            <person name="Weiss R.B."/>
            <person name="Dunn D.M."/>
            <person name="Green E.D."/>
            <person name="Blakesley R.W."/>
            <person name="Bouffard G.G."/>
            <person name="De Jong P.J."/>
            <person name="Osoegawa K."/>
            <person name="Zhu B."/>
            <person name="Marra M."/>
            <person name="Schein J."/>
            <person name="Bosdet I."/>
            <person name="Fjell C."/>
            <person name="Jones S."/>
            <person name="Krzywinski M."/>
            <person name="Mathewson C."/>
            <person name="Siddiqui A."/>
            <person name="Wye N."/>
            <person name="McPherson J."/>
            <person name="Zhao S."/>
            <person name="Fraser C.M."/>
            <person name="Shetty J."/>
            <person name="Shatsman S."/>
            <person name="Geer K."/>
            <person name="Chen Y."/>
            <person name="Abramzon S."/>
            <person name="Nierman W.C."/>
            <person name="Havlak P.H."/>
            <person name="Chen R."/>
            <person name="Durbin K.J."/>
            <person name="Egan A."/>
            <person name="Ren Y."/>
            <person name="Song X.-Z."/>
            <person name="Li B."/>
            <person name="Liu Y."/>
            <person name="Qin X."/>
            <person name="Cawley S."/>
            <person name="Cooney A.J."/>
            <person name="D'Souza L.M."/>
            <person name="Martin K."/>
            <person name="Wu J.Q."/>
            <person name="Gonzalez-Garay M.L."/>
            <person name="Jackson A.R."/>
            <person name="Kalafus K.J."/>
            <person name="McLeod M.P."/>
            <person name="Milosavljevic A."/>
            <person name="Virk D."/>
            <person name="Volkov A."/>
            <person name="Wheeler D.A."/>
            <person name="Zhang Z."/>
            <person name="Bailey J.A."/>
            <person name="Eichler E.E."/>
            <person name="Tuzun E."/>
            <person name="Birney E."/>
            <person name="Mongin E."/>
            <person name="Ureta-Vidal A."/>
            <person name="Woodwark C."/>
            <person name="Zdobnov E."/>
            <person name="Bork P."/>
            <person name="Suyama M."/>
            <person name="Torrents D."/>
            <person name="Alexandersson M."/>
            <person name="Trask B.J."/>
            <person name="Young J.M."/>
            <person name="Huang H."/>
            <person name="Wang H."/>
            <person name="Xing H."/>
            <person name="Daniels S."/>
            <person name="Gietzen D."/>
            <person name="Schmidt J."/>
            <person name="Stevens K."/>
            <person name="Vitt U."/>
            <person name="Wingrove J."/>
            <person name="Camara F."/>
            <person name="Mar Alba M."/>
            <person name="Abril J.F."/>
            <person name="Guigo R."/>
            <person name="Smit A."/>
            <person name="Dubchak I."/>
            <person name="Rubin E.M."/>
            <person name="Couronne O."/>
            <person name="Poliakov A."/>
            <person name="Huebner N."/>
            <person name="Ganten D."/>
            <person name="Goesele C."/>
            <person name="Hummel O."/>
            <person name="Kreitler T."/>
            <person name="Lee Y.-A."/>
            <person name="Monti J."/>
            <person name="Schulz H."/>
            <person name="Zimdahl H."/>
            <person name="Himmelbauer H."/>
            <person name="Lehrach H."/>
            <person name="Jacob H.J."/>
            <person name="Bromberg S."/>
            <person name="Gullings-Handley J."/>
            <person name="Jensen-Seaman M.I."/>
            <person name="Kwitek A.E."/>
            <person name="Lazar J."/>
            <person name="Pasko D."/>
            <person name="Tonellato P.J."/>
            <person name="Twigger S."/>
            <person name="Ponting C.P."/>
            <person name="Duarte J.M."/>
            <person name="Rice S."/>
            <person name="Goodstadt L."/>
            <person name="Beatson S.A."/>
            <person name="Emes R.D."/>
            <person name="Winter E.E."/>
            <person name="Webber C."/>
            <person name="Brandt P."/>
            <person name="Nyakatura G."/>
            <person name="Adetobi M."/>
            <person name="Chiaromonte F."/>
            <person name="Elnitski L."/>
            <person name="Eswara P."/>
            <person name="Hardison R.C."/>
            <person name="Hou M."/>
            <person name="Kolbe D."/>
            <person name="Makova K."/>
            <person name="Miller W."/>
            <person name="Nekrutenko A."/>
            <person name="Riemer C."/>
            <person name="Schwartz S."/>
            <person name="Taylor J."/>
            <person name="Yang S."/>
            <person name="Zhang Y."/>
            <person name="Lindpaintner K."/>
            <person name="Andrews T.D."/>
            <person name="Caccamo M."/>
            <person name="Clamp M."/>
            <person name="Clarke L."/>
            <person name="Curwen V."/>
            <person name="Durbin R.M."/>
            <person name="Eyras E."/>
            <person name="Searle S.M."/>
            <person name="Cooper G.M."/>
            <person name="Batzoglou S."/>
            <person name="Brudno M."/>
            <person name="Sidow A."/>
            <person name="Stone E.A."/>
            <person name="Payseur B.A."/>
            <person name="Bourque G."/>
            <person name="Lopez-Otin C."/>
            <person name="Puente X.S."/>
            <person name="Chakrabarti K."/>
            <person name="Chatterji S."/>
            <person name="Dewey C."/>
            <person name="Pachter L."/>
            <person name="Bray N."/>
            <person name="Yap V.B."/>
            <person name="Caspi A."/>
            <person name="Tesler G."/>
            <person name="Pevzner P.A."/>
            <person name="Haussler D."/>
            <person name="Roskin K.M."/>
            <person name="Baertsch R."/>
            <person name="Clawson H."/>
            <person name="Furey T.S."/>
            <person name="Hinrichs A.S."/>
            <person name="Karolchik D."/>
            <person name="Kent W.J."/>
            <person name="Rosenbloom K.R."/>
            <person name="Trumbower H."/>
            <person name="Weirauch M."/>
            <person name="Cooper D.N."/>
            <person name="Stenson P.D."/>
            <person name="Ma B."/>
            <person name="Brent M."/>
            <person name="Arumugam M."/>
            <person name="Shteynberg D."/>
            <person name="Copley R.R."/>
            <person name="Taylor M.S."/>
            <person name="Riethman H."/>
            <person name="Mudunuri U."/>
            <person name="Peterson J."/>
            <person name="Guyer M."/>
            <person name="Felsenfeld A."/>
            <person name="Old S."/>
            <person name="Mockrin S."/>
            <person name="Collins F.S."/>
        </authorList>
    </citation>
    <scope>NUCLEOTIDE SEQUENCE [LARGE SCALE GENOMIC DNA]</scope>
    <source>
        <strain>Brown Norway</strain>
    </source>
</reference>
<reference key="2">
    <citation type="submission" date="2005-07" db="EMBL/GenBank/DDBJ databases">
        <authorList>
            <person name="Mural R.J."/>
            <person name="Adams M.D."/>
            <person name="Myers E.W."/>
            <person name="Smith H.O."/>
            <person name="Venter J.C."/>
        </authorList>
    </citation>
    <scope>NUCLEOTIDE SEQUENCE [LARGE SCALE GENOMIC DNA]</scope>
    <source>
        <strain>Brown Norway</strain>
    </source>
</reference>
<reference key="3">
    <citation type="journal article" date="1990" name="Mol. Cell. Biochem.">
        <title>Molecular cloning, sequencing and expression of an alpha 2-adrenergic receptor complementary DNA from rat brain.</title>
        <authorList>
            <person name="Chalberg S.C."/>
            <person name="Duda T."/>
            <person name="Rhine J.A."/>
            <person name="Sharma R.K."/>
        </authorList>
    </citation>
    <scope>NUCLEOTIDE SEQUENCE [MRNA] OF 16-465</scope>
</reference>
<reference key="4">
    <citation type="journal article" date="1991" name="J. Biol. Chem.">
        <title>Isolation of rat genomic clones encoding subtypes of the alpha 2-adrenergic receptor. Identification of a unique receptor subtype.</title>
        <authorList>
            <person name="Lanier S.M."/>
            <person name="Downing S."/>
            <person name="Duzic E."/>
            <person name="Homcy C.J."/>
        </authorList>
    </citation>
    <scope>NUCLEOTIDE SEQUENCE [GENOMIC DNA] OF 16-465</scope>
</reference>
<reference key="5">
    <citation type="journal article" date="1995" name="Mol. Cell. Biochem.">
        <title>Structural, genetic and pharmacological identity of the rat alpha 2-adrenergic receptor subtype cA2-47 and its molecular characterization in rat adrenal, adrenocortical carcinoma and bovine retina.</title>
        <authorList>
            <person name="Wypijewski K."/>
            <person name="Duda T."/>
            <person name="Sharma R.K."/>
        </authorList>
    </citation>
    <scope>TISSUE SPECIFICITY</scope>
</reference>
<reference key="6">
    <citation type="journal article" date="2012" name="Nat. Commun.">
        <title>Quantitative maps of protein phosphorylation sites across 14 different rat organs and tissues.</title>
        <authorList>
            <person name="Lundby A."/>
            <person name="Secher A."/>
            <person name="Lage K."/>
            <person name="Nordsborg N.B."/>
            <person name="Dmytriyev A."/>
            <person name="Lundby C."/>
            <person name="Olsen J.V."/>
        </authorList>
    </citation>
    <scope>PHOSPHORYLATION [LARGE SCALE ANALYSIS] AT SER-346</scope>
    <scope>IDENTIFICATION BY MASS SPECTROMETRY [LARGE SCALE ANALYSIS]</scope>
</reference>
<organism>
    <name type="scientific">Rattus norvegicus</name>
    <name type="common">Rat</name>
    <dbReference type="NCBI Taxonomy" id="10116"/>
    <lineage>
        <taxon>Eukaryota</taxon>
        <taxon>Metazoa</taxon>
        <taxon>Chordata</taxon>
        <taxon>Craniata</taxon>
        <taxon>Vertebrata</taxon>
        <taxon>Euteleostomi</taxon>
        <taxon>Mammalia</taxon>
        <taxon>Eutheria</taxon>
        <taxon>Euarchontoglires</taxon>
        <taxon>Glires</taxon>
        <taxon>Rodentia</taxon>
        <taxon>Myomorpha</taxon>
        <taxon>Muroidea</taxon>
        <taxon>Muridae</taxon>
        <taxon>Murinae</taxon>
        <taxon>Rattus</taxon>
    </lineage>
</organism>
<dbReference type="EMBL" id="AABR07006974">
    <property type="status" value="NOT_ANNOTATED_CDS"/>
    <property type="molecule type" value="Genomic_DNA"/>
</dbReference>
<dbReference type="EMBL" id="CH473986">
    <property type="protein sequence ID" value="EDL94449.1"/>
    <property type="molecule type" value="Genomic_DNA"/>
</dbReference>
<dbReference type="EMBL" id="U79031">
    <property type="protein sequence ID" value="AAC24959.1"/>
    <property type="molecule type" value="mRNA"/>
</dbReference>
<dbReference type="EMBL" id="M62372">
    <property type="protein sequence ID" value="AAA42034.1"/>
    <property type="molecule type" value="Genomic_DNA"/>
</dbReference>
<dbReference type="PIR" id="B40392">
    <property type="entry name" value="B40392"/>
</dbReference>
<dbReference type="PIR" id="JH0190">
    <property type="entry name" value="JH0190"/>
</dbReference>
<dbReference type="RefSeq" id="NP_036871.3">
    <property type="nucleotide sequence ID" value="NM_012739.3"/>
</dbReference>
<dbReference type="BMRB" id="P22909"/>
<dbReference type="SMR" id="P22909"/>
<dbReference type="CORUM" id="P22909"/>
<dbReference type="FunCoup" id="P22909">
    <property type="interactions" value="449"/>
</dbReference>
<dbReference type="STRING" id="10116.ENSRNOP00000066242"/>
<dbReference type="BindingDB" id="P22909"/>
<dbReference type="ChEMBL" id="CHEMBL327"/>
<dbReference type="DrugCentral" id="P22909"/>
<dbReference type="GuidetoPHARMACOLOGY" id="25"/>
<dbReference type="GlyCosmos" id="P22909">
    <property type="glycosylation" value="2 sites, No reported glycans"/>
</dbReference>
<dbReference type="GlyGen" id="P22909">
    <property type="glycosylation" value="2 sites"/>
</dbReference>
<dbReference type="iPTMnet" id="P22909"/>
<dbReference type="PhosphoSitePlus" id="P22909"/>
<dbReference type="PaxDb" id="10116-ENSRNOP00000066242"/>
<dbReference type="Ensembl" id="ENSRNOT00000071541.2">
    <property type="protein sequence ID" value="ENSRNOP00000066242.1"/>
    <property type="gene ID" value="ENSRNOG00000047545.2"/>
</dbReference>
<dbReference type="GeneID" id="25083"/>
<dbReference type="KEGG" id="rno:25083"/>
<dbReference type="AGR" id="RGD:2056"/>
<dbReference type="CTD" id="150"/>
<dbReference type="RGD" id="2056">
    <property type="gene designation" value="Adra2a"/>
</dbReference>
<dbReference type="eggNOG" id="KOG3656">
    <property type="taxonomic scope" value="Eukaryota"/>
</dbReference>
<dbReference type="GeneTree" id="ENSGT00940000161451"/>
<dbReference type="HOGENOM" id="CLU_009579_11_1_1"/>
<dbReference type="InParanoid" id="P22909"/>
<dbReference type="OMA" id="FFTYMLM"/>
<dbReference type="OrthoDB" id="5975661at2759"/>
<dbReference type="PhylomeDB" id="P22909"/>
<dbReference type="Reactome" id="R-RNO-390696">
    <property type="pathway name" value="Adrenoceptors"/>
</dbReference>
<dbReference type="Reactome" id="R-RNO-392023">
    <property type="pathway name" value="Adrenaline signalling through Alpha-2 adrenergic receptor"/>
</dbReference>
<dbReference type="Reactome" id="R-RNO-400042">
    <property type="pathway name" value="Adrenaline,noradrenaline inhibits insulin secretion"/>
</dbReference>
<dbReference type="Reactome" id="R-RNO-418594">
    <property type="pathway name" value="G alpha (i) signalling events"/>
</dbReference>
<dbReference type="Reactome" id="R-RNO-418597">
    <property type="pathway name" value="G alpha (z) signalling events"/>
</dbReference>
<dbReference type="Reactome" id="R-RNO-5683826">
    <property type="pathway name" value="Surfactant metabolism"/>
</dbReference>
<dbReference type="PRO" id="PR:P22909"/>
<dbReference type="Proteomes" id="UP000002494">
    <property type="component" value="Chromosome 1"/>
</dbReference>
<dbReference type="Proteomes" id="UP000234681">
    <property type="component" value="Chromosome 1"/>
</dbReference>
<dbReference type="Bgee" id="ENSRNOG00000047545">
    <property type="expression patterns" value="Expressed in brain and 18 other cell types or tissues"/>
</dbReference>
<dbReference type="GO" id="GO:0043679">
    <property type="term" value="C:axon terminus"/>
    <property type="evidence" value="ECO:0000314"/>
    <property type="project" value="RGD"/>
</dbReference>
<dbReference type="GO" id="GO:0005737">
    <property type="term" value="C:cytoplasm"/>
    <property type="evidence" value="ECO:0000266"/>
    <property type="project" value="RGD"/>
</dbReference>
<dbReference type="GO" id="GO:0098691">
    <property type="term" value="C:dopaminergic synapse"/>
    <property type="evidence" value="ECO:0000266"/>
    <property type="project" value="RGD"/>
</dbReference>
<dbReference type="GO" id="GO:0098982">
    <property type="term" value="C:GABA-ergic synapse"/>
    <property type="evidence" value="ECO:0000314"/>
    <property type="project" value="SynGO"/>
</dbReference>
<dbReference type="GO" id="GO:0098978">
    <property type="term" value="C:glutamatergic synapse"/>
    <property type="evidence" value="ECO:0000314"/>
    <property type="project" value="SynGO"/>
</dbReference>
<dbReference type="GO" id="GO:0043025">
    <property type="term" value="C:neuronal cell body"/>
    <property type="evidence" value="ECO:0000314"/>
    <property type="project" value="RGD"/>
</dbReference>
<dbReference type="GO" id="GO:0005886">
    <property type="term" value="C:plasma membrane"/>
    <property type="evidence" value="ECO:0000266"/>
    <property type="project" value="RGD"/>
</dbReference>
<dbReference type="GO" id="GO:0098839">
    <property type="term" value="C:postsynaptic density membrane"/>
    <property type="evidence" value="ECO:0000314"/>
    <property type="project" value="SynGO"/>
</dbReference>
<dbReference type="GO" id="GO:0045211">
    <property type="term" value="C:postsynaptic membrane"/>
    <property type="evidence" value="ECO:0000314"/>
    <property type="project" value="SynGO"/>
</dbReference>
<dbReference type="GO" id="GO:0048787">
    <property type="term" value="C:presynaptic active zone membrane"/>
    <property type="evidence" value="ECO:0000314"/>
    <property type="project" value="SynGO"/>
</dbReference>
<dbReference type="GO" id="GO:0043235">
    <property type="term" value="C:receptor complex"/>
    <property type="evidence" value="ECO:0000266"/>
    <property type="project" value="RGD"/>
</dbReference>
<dbReference type="GO" id="GO:0004935">
    <property type="term" value="F:adrenergic receptor activity"/>
    <property type="evidence" value="ECO:0000266"/>
    <property type="project" value="RGD"/>
</dbReference>
<dbReference type="GO" id="GO:0031692">
    <property type="term" value="F:alpha-1B adrenergic receptor binding"/>
    <property type="evidence" value="ECO:0000266"/>
    <property type="project" value="RGD"/>
</dbReference>
<dbReference type="GO" id="GO:0031696">
    <property type="term" value="F:alpha-2C adrenergic receptor binding"/>
    <property type="evidence" value="ECO:0000266"/>
    <property type="project" value="RGD"/>
</dbReference>
<dbReference type="GO" id="GO:0004938">
    <property type="term" value="F:alpha2-adrenergic receptor activity"/>
    <property type="evidence" value="ECO:0000314"/>
    <property type="project" value="RGD"/>
</dbReference>
<dbReference type="GO" id="GO:0051379">
    <property type="term" value="F:epinephrine binding"/>
    <property type="evidence" value="ECO:0000266"/>
    <property type="project" value="RGD"/>
</dbReference>
<dbReference type="GO" id="GO:0032795">
    <property type="term" value="F:heterotrimeric G-protein binding"/>
    <property type="evidence" value="ECO:0000266"/>
    <property type="project" value="RGD"/>
</dbReference>
<dbReference type="GO" id="GO:0051380">
    <property type="term" value="F:norepinephrine binding"/>
    <property type="evidence" value="ECO:0000266"/>
    <property type="project" value="RGD"/>
</dbReference>
<dbReference type="GO" id="GO:0046982">
    <property type="term" value="F:protein heterodimerization activity"/>
    <property type="evidence" value="ECO:0000266"/>
    <property type="project" value="RGD"/>
</dbReference>
<dbReference type="GO" id="GO:0042803">
    <property type="term" value="F:protein homodimerization activity"/>
    <property type="evidence" value="ECO:0000266"/>
    <property type="project" value="RGD"/>
</dbReference>
<dbReference type="GO" id="GO:0019901">
    <property type="term" value="F:protein kinase binding"/>
    <property type="evidence" value="ECO:0000266"/>
    <property type="project" value="RGD"/>
</dbReference>
<dbReference type="GO" id="GO:0031996">
    <property type="term" value="F:thioesterase binding"/>
    <property type="evidence" value="ECO:0000266"/>
    <property type="project" value="RGD"/>
</dbReference>
<dbReference type="GO" id="GO:0071880">
    <property type="term" value="P:adenylate cyclase-activating adrenergic receptor signaling pathway"/>
    <property type="evidence" value="ECO:0000266"/>
    <property type="project" value="RGD"/>
</dbReference>
<dbReference type="GO" id="GO:0007189">
    <property type="term" value="P:adenylate cyclase-activating G protein-coupled receptor signaling pathway"/>
    <property type="evidence" value="ECO:0000266"/>
    <property type="project" value="RGD"/>
</dbReference>
<dbReference type="GO" id="GO:0071881">
    <property type="term" value="P:adenylate cyclase-inhibiting adrenergic receptor signaling pathway"/>
    <property type="evidence" value="ECO:0000266"/>
    <property type="project" value="RGD"/>
</dbReference>
<dbReference type="GO" id="GO:0007193">
    <property type="term" value="P:adenylate cyclase-inhibiting G protein-coupled receptor signaling pathway"/>
    <property type="evidence" value="ECO:0000266"/>
    <property type="project" value="RGD"/>
</dbReference>
<dbReference type="GO" id="GO:0071875">
    <property type="term" value="P:adrenergic receptor signaling pathway"/>
    <property type="evidence" value="ECO:0000266"/>
    <property type="project" value="RGD"/>
</dbReference>
<dbReference type="GO" id="GO:0032870">
    <property type="term" value="P:cellular response to hormone stimulus"/>
    <property type="evidence" value="ECO:0000266"/>
    <property type="project" value="RGD"/>
</dbReference>
<dbReference type="GO" id="GO:0006260">
    <property type="term" value="P:DNA replication"/>
    <property type="evidence" value="ECO:0000315"/>
    <property type="project" value="RGD"/>
</dbReference>
<dbReference type="GO" id="GO:0042596">
    <property type="term" value="P:fear response"/>
    <property type="evidence" value="ECO:0000266"/>
    <property type="project" value="RGD"/>
</dbReference>
<dbReference type="GO" id="GO:0007565">
    <property type="term" value="P:female pregnancy"/>
    <property type="evidence" value="ECO:0000315"/>
    <property type="project" value="RGD"/>
</dbReference>
<dbReference type="GO" id="GO:0007186">
    <property type="term" value="P:G protein-coupled receptor signaling pathway"/>
    <property type="evidence" value="ECO:0000315"/>
    <property type="project" value="BHF-UCL"/>
</dbReference>
<dbReference type="GO" id="GO:0042593">
    <property type="term" value="P:glucose homeostasis"/>
    <property type="evidence" value="ECO:0000315"/>
    <property type="project" value="BHF-UCL"/>
</dbReference>
<dbReference type="GO" id="GO:0051926">
    <property type="term" value="P:negative regulation of calcium ion transport"/>
    <property type="evidence" value="ECO:0000266"/>
    <property type="project" value="RGD"/>
</dbReference>
<dbReference type="GO" id="GO:0045955">
    <property type="term" value="P:negative regulation of calcium ion-dependent exocytosis"/>
    <property type="evidence" value="ECO:0000315"/>
    <property type="project" value="BHF-UCL"/>
</dbReference>
<dbReference type="GO" id="GO:0046676">
    <property type="term" value="P:negative regulation of insulin secretion"/>
    <property type="evidence" value="ECO:0000266"/>
    <property type="project" value="RGD"/>
</dbReference>
<dbReference type="GO" id="GO:0061179">
    <property type="term" value="P:negative regulation of insulin secretion involved in cellular response to glucose stimulus"/>
    <property type="evidence" value="ECO:0000315"/>
    <property type="project" value="BHF-UCL"/>
</dbReference>
<dbReference type="GO" id="GO:0050995">
    <property type="term" value="P:negative regulation of lipid catabolic process"/>
    <property type="evidence" value="ECO:0000266"/>
    <property type="project" value="RGD"/>
</dbReference>
<dbReference type="GO" id="GO:0070473">
    <property type="term" value="P:negative regulation of uterine smooth muscle contraction"/>
    <property type="evidence" value="ECO:0000315"/>
    <property type="project" value="RGD"/>
</dbReference>
<dbReference type="GO" id="GO:0071882">
    <property type="term" value="P:phospholipase C-activating adrenergic receptor signaling pathway"/>
    <property type="evidence" value="ECO:0000266"/>
    <property type="project" value="RGD"/>
</dbReference>
<dbReference type="GO" id="GO:0030168">
    <property type="term" value="P:platelet activation"/>
    <property type="evidence" value="ECO:0007669"/>
    <property type="project" value="InterPro"/>
</dbReference>
<dbReference type="GO" id="GO:0030335">
    <property type="term" value="P:positive regulation of cell migration"/>
    <property type="evidence" value="ECO:0000266"/>
    <property type="project" value="RGD"/>
</dbReference>
<dbReference type="GO" id="GO:0001819">
    <property type="term" value="P:positive regulation of cytokine production"/>
    <property type="evidence" value="ECO:0000266"/>
    <property type="project" value="RGD"/>
</dbReference>
<dbReference type="GO" id="GO:0045742">
    <property type="term" value="P:positive regulation of epidermal growth factor receptor signaling pathway"/>
    <property type="evidence" value="ECO:0000266"/>
    <property type="project" value="RGD"/>
</dbReference>
<dbReference type="GO" id="GO:0043410">
    <property type="term" value="P:positive regulation of MAPK cascade"/>
    <property type="evidence" value="ECO:0000266"/>
    <property type="project" value="RGD"/>
</dbReference>
<dbReference type="GO" id="GO:0051044">
    <property type="term" value="P:positive regulation of membrane protein ectodomain proteolysis"/>
    <property type="evidence" value="ECO:0000266"/>
    <property type="project" value="RGD"/>
</dbReference>
<dbReference type="GO" id="GO:0051897">
    <property type="term" value="P:positive regulation of phosphatidylinositol 3-kinase/protein kinase B signal transduction"/>
    <property type="evidence" value="ECO:0007669"/>
    <property type="project" value="Ensembl"/>
</dbReference>
<dbReference type="GO" id="GO:0043268">
    <property type="term" value="P:positive regulation of potassium ion transport"/>
    <property type="evidence" value="ECO:0000266"/>
    <property type="project" value="RGD"/>
</dbReference>
<dbReference type="GO" id="GO:0090303">
    <property type="term" value="P:positive regulation of wound healing"/>
    <property type="evidence" value="ECO:0000266"/>
    <property type="project" value="RGD"/>
</dbReference>
<dbReference type="GO" id="GO:0099171">
    <property type="term" value="P:presynaptic modulation of chemical synaptic transmission"/>
    <property type="evidence" value="ECO:0000266"/>
    <property type="project" value="RGD"/>
</dbReference>
<dbReference type="GO" id="GO:0019229">
    <property type="term" value="P:regulation of vasoconstriction"/>
    <property type="evidence" value="ECO:0007669"/>
    <property type="project" value="InterPro"/>
</dbReference>
<dbReference type="GO" id="GO:0097305">
    <property type="term" value="P:response to alcohol"/>
    <property type="evidence" value="ECO:0000270"/>
    <property type="project" value="RGD"/>
</dbReference>
<dbReference type="GO" id="GO:0043278">
    <property type="term" value="P:response to morphine"/>
    <property type="evidence" value="ECO:0000270"/>
    <property type="project" value="RGD"/>
</dbReference>
<dbReference type="GO" id="GO:0050955">
    <property type="term" value="P:thermoception"/>
    <property type="evidence" value="ECO:0000314"/>
    <property type="project" value="RGD"/>
</dbReference>
<dbReference type="GO" id="GO:0042311">
    <property type="term" value="P:vasodilation"/>
    <property type="evidence" value="ECO:0000314"/>
    <property type="project" value="RGD"/>
</dbReference>
<dbReference type="CDD" id="cd15322">
    <property type="entry name" value="7tmA_alpha2A_AR"/>
    <property type="match status" value="1"/>
</dbReference>
<dbReference type="Gene3D" id="1.20.1070.10">
    <property type="entry name" value="Rhodopsin 7-helix transmembrane proteins"/>
    <property type="match status" value="1"/>
</dbReference>
<dbReference type="InterPro" id="IPR002233">
    <property type="entry name" value="ADR_fam"/>
</dbReference>
<dbReference type="InterPro" id="IPR001946">
    <property type="entry name" value="ADRA2A_rcpt"/>
</dbReference>
<dbReference type="InterPro" id="IPR000276">
    <property type="entry name" value="GPCR_Rhodpsn"/>
</dbReference>
<dbReference type="InterPro" id="IPR017452">
    <property type="entry name" value="GPCR_Rhodpsn_7TM"/>
</dbReference>
<dbReference type="PANTHER" id="PTHR24248">
    <property type="entry name" value="ADRENERGIC RECEPTOR-RELATED G-PROTEIN COUPLED RECEPTOR"/>
    <property type="match status" value="1"/>
</dbReference>
<dbReference type="PANTHER" id="PTHR24248:SF24">
    <property type="entry name" value="ALPHA-2A ADRENERGIC RECEPTOR"/>
    <property type="match status" value="1"/>
</dbReference>
<dbReference type="Pfam" id="PF00001">
    <property type="entry name" value="7tm_1"/>
    <property type="match status" value="1"/>
</dbReference>
<dbReference type="PRINTS" id="PR01103">
    <property type="entry name" value="ADRENERGICR"/>
</dbReference>
<dbReference type="PRINTS" id="PR00558">
    <property type="entry name" value="ADRENRGCA2AR"/>
</dbReference>
<dbReference type="PRINTS" id="PR00237">
    <property type="entry name" value="GPCRRHODOPSN"/>
</dbReference>
<dbReference type="SMART" id="SM01381">
    <property type="entry name" value="7TM_GPCR_Srsx"/>
    <property type="match status" value="1"/>
</dbReference>
<dbReference type="SUPFAM" id="SSF81321">
    <property type="entry name" value="Family A G protein-coupled receptor-like"/>
    <property type="match status" value="1"/>
</dbReference>
<dbReference type="PROSITE" id="PS00237">
    <property type="entry name" value="G_PROTEIN_RECEP_F1_1"/>
    <property type="match status" value="1"/>
</dbReference>
<dbReference type="PROSITE" id="PS50262">
    <property type="entry name" value="G_PROTEIN_RECEP_F1_2"/>
    <property type="match status" value="1"/>
</dbReference>
<gene>
    <name evidence="8" type="primary">Adra2a</name>
</gene>
<comment type="function">
    <text>Alpha-2 adrenergic receptors mediate the catecholamine-induced inhibition of adenylate cyclase through the action of G proteins.</text>
</comment>
<comment type="subcellular location">
    <subcellularLocation>
        <location>Cell membrane</location>
        <topology>Multi-pass membrane protein</topology>
    </subcellularLocation>
</comment>
<comment type="tissue specificity">
    <text evidence="6">Expressed in brain.</text>
</comment>
<comment type="similarity">
    <text evidence="4">Belongs to the G-protein coupled receptor 1 family. Adrenergic receptor subfamily. ADRA2A sub-subfamily.</text>
</comment>
<comment type="caution">
    <text evidence="7">It is uncertain whether Met-1 or Met-16 is the initiator.</text>
</comment>
<feature type="chain" id="PRO_0000069083" description="Alpha-2A adrenergic receptor">
    <location>
        <begin position="1"/>
        <end position="465"/>
    </location>
</feature>
<feature type="topological domain" description="Extracellular" evidence="1">
    <location>
        <begin position="1"/>
        <end position="48"/>
    </location>
</feature>
<feature type="transmembrane region" description="Helical; Name=1" evidence="1">
    <location>
        <begin position="49"/>
        <end position="74"/>
    </location>
</feature>
<feature type="topological domain" description="Cytoplasmic" evidence="1">
    <location>
        <begin position="75"/>
        <end position="85"/>
    </location>
</feature>
<feature type="transmembrane region" description="Helical; Name=2" evidence="1">
    <location>
        <begin position="86"/>
        <end position="111"/>
    </location>
</feature>
<feature type="topological domain" description="Extracellular" evidence="1">
    <location>
        <begin position="112"/>
        <end position="121"/>
    </location>
</feature>
<feature type="transmembrane region" description="Helical; Name=3" evidence="1">
    <location>
        <begin position="122"/>
        <end position="144"/>
    </location>
</feature>
<feature type="topological domain" description="Cytoplasmic" evidence="1">
    <location>
        <begin position="145"/>
        <end position="164"/>
    </location>
</feature>
<feature type="transmembrane region" description="Helical; Name=4" evidence="1">
    <location>
        <begin position="165"/>
        <end position="188"/>
    </location>
</feature>
<feature type="topological domain" description="Extracellular" evidence="1">
    <location>
        <begin position="189"/>
        <end position="207"/>
    </location>
</feature>
<feature type="transmembrane region" description="Helical; Name=5" evidence="1">
    <location>
        <begin position="208"/>
        <end position="232"/>
    </location>
</feature>
<feature type="topological domain" description="Cytoplasmic" evidence="1">
    <location>
        <begin position="233"/>
        <end position="389"/>
    </location>
</feature>
<feature type="transmembrane region" description="Helical; Name=6" evidence="1">
    <location>
        <begin position="390"/>
        <end position="414"/>
    </location>
</feature>
<feature type="topological domain" description="Extracellular" evidence="1">
    <location>
        <begin position="415"/>
        <end position="424"/>
    </location>
</feature>
<feature type="transmembrane region" description="Helical; Name=7" evidence="1">
    <location>
        <begin position="425"/>
        <end position="445"/>
    </location>
</feature>
<feature type="topological domain" description="Cytoplasmic" evidence="1">
    <location>
        <begin position="446"/>
        <end position="465"/>
    </location>
</feature>
<feature type="region of interest" description="Disordered" evidence="5">
    <location>
        <begin position="242"/>
        <end position="377"/>
    </location>
</feature>
<feature type="compositionally biased region" description="Basic and acidic residues" evidence="5">
    <location>
        <begin position="313"/>
        <end position="330"/>
    </location>
</feature>
<feature type="compositionally biased region" description="Gly residues" evidence="5">
    <location>
        <begin position="353"/>
        <end position="364"/>
    </location>
</feature>
<feature type="site" description="Implicated in ligand binding" evidence="1">
    <location>
        <position position="128"/>
    </location>
</feature>
<feature type="site" description="Implicated in catechol agonist binding" evidence="1">
    <location>
        <position position="215"/>
    </location>
</feature>
<feature type="site" description="Implicated in catechol agonist binding" evidence="1">
    <location>
        <position position="219"/>
    </location>
</feature>
<feature type="modified residue" description="Phosphoserine" evidence="9">
    <location>
        <position position="346"/>
    </location>
</feature>
<feature type="modified residue" description="Omega-N-methylarginine" evidence="2">
    <location>
        <position position="368"/>
    </location>
</feature>
<feature type="lipid moiety-binding region" description="S-palmitoyl cysteine" evidence="1">
    <location>
        <position position="457"/>
    </location>
</feature>
<feature type="glycosylation site" description="N-linked (GlcNAc...) asparagine" evidence="3">
    <location>
        <position position="25"/>
    </location>
</feature>
<feature type="glycosylation site" description="N-linked (GlcNAc...) asparagine" evidence="3">
    <location>
        <position position="29"/>
    </location>
</feature>
<feature type="disulfide bond" evidence="4">
    <location>
        <begin position="121"/>
        <end position="203"/>
    </location>
</feature>
<feature type="sequence conflict" description="In Ref. 4; AAA42034." evidence="7" ref="4">
    <original>GL</original>
    <variation>AV</variation>
    <location>
        <begin position="267"/>
        <end position="268"/>
    </location>
</feature>
<feature type="sequence conflict" description="In Ref. 4; AAA42034." evidence="7" ref="4">
    <original>RP</original>
    <variation>PR</variation>
    <location>
        <begin position="319"/>
        <end position="320"/>
    </location>
</feature>
<feature type="sequence conflict" description="In Ref. 4; AAA42034." evidence="7" ref="4">
    <original>P</original>
    <variation>R</variation>
    <location>
        <position position="348"/>
    </location>
</feature>
<keyword id="KW-1003">Cell membrane</keyword>
<keyword id="KW-1015">Disulfide bond</keyword>
<keyword id="KW-0297">G-protein coupled receptor</keyword>
<keyword id="KW-0325">Glycoprotein</keyword>
<keyword id="KW-0449">Lipoprotein</keyword>
<keyword id="KW-0472">Membrane</keyword>
<keyword id="KW-0488">Methylation</keyword>
<keyword id="KW-0564">Palmitate</keyword>
<keyword id="KW-0597">Phosphoprotein</keyword>
<keyword id="KW-0675">Receptor</keyword>
<keyword id="KW-1185">Reference proteome</keyword>
<keyword id="KW-0807">Transducer</keyword>
<keyword id="KW-0812">Transmembrane</keyword>
<keyword id="KW-1133">Transmembrane helix</keyword>
<proteinExistence type="evidence at protein level"/>